<reference key="1">
    <citation type="journal article" date="2003" name="Nat. Genet.">
        <title>Comparative analysis of the genome sequences of Bordetella pertussis, Bordetella parapertussis and Bordetella bronchiseptica.</title>
        <authorList>
            <person name="Parkhill J."/>
            <person name="Sebaihia M."/>
            <person name="Preston A."/>
            <person name="Murphy L.D."/>
            <person name="Thomson N.R."/>
            <person name="Harris D.E."/>
            <person name="Holden M.T.G."/>
            <person name="Churcher C.M."/>
            <person name="Bentley S.D."/>
            <person name="Mungall K.L."/>
            <person name="Cerdeno-Tarraga A.-M."/>
            <person name="Temple L."/>
            <person name="James K.D."/>
            <person name="Harris B."/>
            <person name="Quail M.A."/>
            <person name="Achtman M."/>
            <person name="Atkin R."/>
            <person name="Baker S."/>
            <person name="Basham D."/>
            <person name="Bason N."/>
            <person name="Cherevach I."/>
            <person name="Chillingworth T."/>
            <person name="Collins M."/>
            <person name="Cronin A."/>
            <person name="Davis P."/>
            <person name="Doggett J."/>
            <person name="Feltwell T."/>
            <person name="Goble A."/>
            <person name="Hamlin N."/>
            <person name="Hauser H."/>
            <person name="Holroyd S."/>
            <person name="Jagels K."/>
            <person name="Leather S."/>
            <person name="Moule S."/>
            <person name="Norberczak H."/>
            <person name="O'Neil S."/>
            <person name="Ormond D."/>
            <person name="Price C."/>
            <person name="Rabbinowitsch E."/>
            <person name="Rutter S."/>
            <person name="Sanders M."/>
            <person name="Saunders D."/>
            <person name="Seeger K."/>
            <person name="Sharp S."/>
            <person name="Simmonds M."/>
            <person name="Skelton J."/>
            <person name="Squares R."/>
            <person name="Squares S."/>
            <person name="Stevens K."/>
            <person name="Unwin L."/>
            <person name="Whitehead S."/>
            <person name="Barrell B.G."/>
            <person name="Maskell D.J."/>
        </authorList>
    </citation>
    <scope>NUCLEOTIDE SEQUENCE [LARGE SCALE GENOMIC DNA]</scope>
    <source>
        <strain>ATCC BAA-588 / NCTC 13252 / RB50</strain>
    </source>
</reference>
<evidence type="ECO:0000250" key="1"/>
<evidence type="ECO:0000255" key="2">
    <source>
        <dbReference type="HAMAP-Rule" id="MF_00047"/>
    </source>
</evidence>
<sequence length="316" mass="33558">MSKQFGKVGVLYGGRSAEREVSLMSGKGVHEALLSAGVDAHLFDTGERSLADLAAAGFERVFIALHGRYGEDGTLQGALELLGIPYTGSGPLASSLSMDKIMTKRVWLQHGLPTPAFEVLGGSTELRLVPDRLGLPLILKPPHEGSTVGITKVAGYSDMKAAYELAARFDAEVLAEQFITGRELTVAVLGSGAAARALPVIEIVAPGGNYDYEHKYFSDDTQYFCPADLPADVAADVAAVAERAYAALGCEGWGRVDFILDRENRPWLLEMNTSPGMTGHSLVPMAARAVGMSYADLCVAILAEAACKVRSPARQD</sequence>
<proteinExistence type="inferred from homology"/>
<keyword id="KW-0067">ATP-binding</keyword>
<keyword id="KW-0133">Cell shape</keyword>
<keyword id="KW-0961">Cell wall biogenesis/degradation</keyword>
<keyword id="KW-0963">Cytoplasm</keyword>
<keyword id="KW-0436">Ligase</keyword>
<keyword id="KW-0460">Magnesium</keyword>
<keyword id="KW-0464">Manganese</keyword>
<keyword id="KW-0479">Metal-binding</keyword>
<keyword id="KW-0547">Nucleotide-binding</keyword>
<keyword id="KW-0573">Peptidoglycan synthesis</keyword>
<feature type="chain" id="PRO_0000177788" description="D-alanine--D-alanine ligase">
    <location>
        <begin position="1"/>
        <end position="316"/>
    </location>
</feature>
<feature type="domain" description="ATP-grasp" evidence="2">
    <location>
        <begin position="104"/>
        <end position="303"/>
    </location>
</feature>
<feature type="binding site" evidence="2">
    <location>
        <begin position="130"/>
        <end position="185"/>
    </location>
    <ligand>
        <name>ATP</name>
        <dbReference type="ChEBI" id="CHEBI:30616"/>
    </ligand>
</feature>
<feature type="binding site" evidence="2">
    <location>
        <position position="257"/>
    </location>
    <ligand>
        <name>Mg(2+)</name>
        <dbReference type="ChEBI" id="CHEBI:18420"/>
        <label>1</label>
    </ligand>
</feature>
<feature type="binding site" evidence="2">
    <location>
        <position position="270"/>
    </location>
    <ligand>
        <name>Mg(2+)</name>
        <dbReference type="ChEBI" id="CHEBI:18420"/>
        <label>1</label>
    </ligand>
</feature>
<feature type="binding site" evidence="2">
    <location>
        <position position="270"/>
    </location>
    <ligand>
        <name>Mg(2+)</name>
        <dbReference type="ChEBI" id="CHEBI:18420"/>
        <label>2</label>
    </ligand>
</feature>
<feature type="binding site" evidence="2">
    <location>
        <position position="272"/>
    </location>
    <ligand>
        <name>Mg(2+)</name>
        <dbReference type="ChEBI" id="CHEBI:18420"/>
        <label>2</label>
    </ligand>
</feature>
<gene>
    <name evidence="2" type="primary">ddl</name>
    <name type="synonym">ddlB</name>
    <name type="ordered locus">BB4196</name>
</gene>
<comment type="function">
    <text evidence="2">Cell wall formation.</text>
</comment>
<comment type="catalytic activity">
    <reaction evidence="2">
        <text>2 D-alanine + ATP = D-alanyl-D-alanine + ADP + phosphate + H(+)</text>
        <dbReference type="Rhea" id="RHEA:11224"/>
        <dbReference type="ChEBI" id="CHEBI:15378"/>
        <dbReference type="ChEBI" id="CHEBI:30616"/>
        <dbReference type="ChEBI" id="CHEBI:43474"/>
        <dbReference type="ChEBI" id="CHEBI:57416"/>
        <dbReference type="ChEBI" id="CHEBI:57822"/>
        <dbReference type="ChEBI" id="CHEBI:456216"/>
        <dbReference type="EC" id="6.3.2.4"/>
    </reaction>
</comment>
<comment type="cofactor">
    <cofactor evidence="1">
        <name>Mg(2+)</name>
        <dbReference type="ChEBI" id="CHEBI:18420"/>
    </cofactor>
    <cofactor evidence="1">
        <name>Mn(2+)</name>
        <dbReference type="ChEBI" id="CHEBI:29035"/>
    </cofactor>
    <text evidence="1">Binds 2 magnesium or manganese ions per subunit.</text>
</comment>
<comment type="pathway">
    <text evidence="2">Cell wall biogenesis; peptidoglycan biosynthesis.</text>
</comment>
<comment type="subcellular location">
    <subcellularLocation>
        <location evidence="2">Cytoplasm</location>
    </subcellularLocation>
</comment>
<comment type="similarity">
    <text evidence="2">Belongs to the D-alanine--D-alanine ligase family.</text>
</comment>
<name>DDL_BORBR</name>
<organism>
    <name type="scientific">Bordetella bronchiseptica (strain ATCC BAA-588 / NCTC 13252 / RB50)</name>
    <name type="common">Alcaligenes bronchisepticus</name>
    <dbReference type="NCBI Taxonomy" id="257310"/>
    <lineage>
        <taxon>Bacteria</taxon>
        <taxon>Pseudomonadati</taxon>
        <taxon>Pseudomonadota</taxon>
        <taxon>Betaproteobacteria</taxon>
        <taxon>Burkholderiales</taxon>
        <taxon>Alcaligenaceae</taxon>
        <taxon>Bordetella</taxon>
    </lineage>
</organism>
<accession>Q7WFS4</accession>
<protein>
    <recommendedName>
        <fullName evidence="2">D-alanine--D-alanine ligase</fullName>
        <ecNumber evidence="2">6.3.2.4</ecNumber>
    </recommendedName>
    <alternativeName>
        <fullName evidence="2">D-Ala-D-Ala ligase</fullName>
    </alternativeName>
    <alternativeName>
        <fullName evidence="2">D-alanylalanine synthetase</fullName>
    </alternativeName>
</protein>
<dbReference type="EC" id="6.3.2.4" evidence="2"/>
<dbReference type="EMBL" id="BX640449">
    <property type="protein sequence ID" value="CAE34560.1"/>
    <property type="molecule type" value="Genomic_DNA"/>
</dbReference>
<dbReference type="RefSeq" id="WP_003814571.1">
    <property type="nucleotide sequence ID" value="NC_002927.3"/>
</dbReference>
<dbReference type="SMR" id="Q7WFS4"/>
<dbReference type="KEGG" id="bbr:BB4196"/>
<dbReference type="eggNOG" id="COG1181">
    <property type="taxonomic scope" value="Bacteria"/>
</dbReference>
<dbReference type="HOGENOM" id="CLU_039268_1_2_4"/>
<dbReference type="UniPathway" id="UPA00219"/>
<dbReference type="Proteomes" id="UP000001027">
    <property type="component" value="Chromosome"/>
</dbReference>
<dbReference type="GO" id="GO:0005829">
    <property type="term" value="C:cytosol"/>
    <property type="evidence" value="ECO:0007669"/>
    <property type="project" value="TreeGrafter"/>
</dbReference>
<dbReference type="GO" id="GO:0005524">
    <property type="term" value="F:ATP binding"/>
    <property type="evidence" value="ECO:0007669"/>
    <property type="project" value="UniProtKB-KW"/>
</dbReference>
<dbReference type="GO" id="GO:0008716">
    <property type="term" value="F:D-alanine-D-alanine ligase activity"/>
    <property type="evidence" value="ECO:0007669"/>
    <property type="project" value="UniProtKB-UniRule"/>
</dbReference>
<dbReference type="GO" id="GO:0046872">
    <property type="term" value="F:metal ion binding"/>
    <property type="evidence" value="ECO:0007669"/>
    <property type="project" value="UniProtKB-KW"/>
</dbReference>
<dbReference type="GO" id="GO:0071555">
    <property type="term" value="P:cell wall organization"/>
    <property type="evidence" value="ECO:0007669"/>
    <property type="project" value="UniProtKB-KW"/>
</dbReference>
<dbReference type="GO" id="GO:0009252">
    <property type="term" value="P:peptidoglycan biosynthetic process"/>
    <property type="evidence" value="ECO:0007669"/>
    <property type="project" value="UniProtKB-UniRule"/>
</dbReference>
<dbReference type="GO" id="GO:0008360">
    <property type="term" value="P:regulation of cell shape"/>
    <property type="evidence" value="ECO:0007669"/>
    <property type="project" value="UniProtKB-KW"/>
</dbReference>
<dbReference type="FunFam" id="3.30.470.20:FF:000008">
    <property type="entry name" value="D-alanine--D-alanine ligase"/>
    <property type="match status" value="1"/>
</dbReference>
<dbReference type="FunFam" id="3.40.50.20:FF:000013">
    <property type="entry name" value="D-alanine--D-alanine ligase"/>
    <property type="match status" value="1"/>
</dbReference>
<dbReference type="Gene3D" id="3.40.50.20">
    <property type="match status" value="1"/>
</dbReference>
<dbReference type="Gene3D" id="3.30.1490.20">
    <property type="entry name" value="ATP-grasp fold, A domain"/>
    <property type="match status" value="1"/>
</dbReference>
<dbReference type="Gene3D" id="3.30.470.20">
    <property type="entry name" value="ATP-grasp fold, B domain"/>
    <property type="match status" value="1"/>
</dbReference>
<dbReference type="HAMAP" id="MF_00047">
    <property type="entry name" value="Dala_Dala_lig"/>
    <property type="match status" value="1"/>
</dbReference>
<dbReference type="InterPro" id="IPR011761">
    <property type="entry name" value="ATP-grasp"/>
</dbReference>
<dbReference type="InterPro" id="IPR013815">
    <property type="entry name" value="ATP_grasp_subdomain_1"/>
</dbReference>
<dbReference type="InterPro" id="IPR000291">
    <property type="entry name" value="D-Ala_lig_Van_CS"/>
</dbReference>
<dbReference type="InterPro" id="IPR005905">
    <property type="entry name" value="D_ala_D_ala"/>
</dbReference>
<dbReference type="InterPro" id="IPR011095">
    <property type="entry name" value="Dala_Dala_lig_C"/>
</dbReference>
<dbReference type="InterPro" id="IPR011127">
    <property type="entry name" value="Dala_Dala_lig_N"/>
</dbReference>
<dbReference type="InterPro" id="IPR016185">
    <property type="entry name" value="PreATP-grasp_dom_sf"/>
</dbReference>
<dbReference type="NCBIfam" id="TIGR01205">
    <property type="entry name" value="D_ala_D_alaTIGR"/>
    <property type="match status" value="1"/>
</dbReference>
<dbReference type="NCBIfam" id="NF002378">
    <property type="entry name" value="PRK01372.1"/>
    <property type="match status" value="1"/>
</dbReference>
<dbReference type="PANTHER" id="PTHR23132">
    <property type="entry name" value="D-ALANINE--D-ALANINE LIGASE"/>
    <property type="match status" value="1"/>
</dbReference>
<dbReference type="PANTHER" id="PTHR23132:SF23">
    <property type="entry name" value="D-ALANINE--D-ALANINE LIGASE B"/>
    <property type="match status" value="1"/>
</dbReference>
<dbReference type="Pfam" id="PF07478">
    <property type="entry name" value="Dala_Dala_lig_C"/>
    <property type="match status" value="1"/>
</dbReference>
<dbReference type="Pfam" id="PF01820">
    <property type="entry name" value="Dala_Dala_lig_N"/>
    <property type="match status" value="1"/>
</dbReference>
<dbReference type="PIRSF" id="PIRSF039102">
    <property type="entry name" value="Ddl/VanB"/>
    <property type="match status" value="1"/>
</dbReference>
<dbReference type="SUPFAM" id="SSF56059">
    <property type="entry name" value="Glutathione synthetase ATP-binding domain-like"/>
    <property type="match status" value="1"/>
</dbReference>
<dbReference type="SUPFAM" id="SSF52440">
    <property type="entry name" value="PreATP-grasp domain"/>
    <property type="match status" value="1"/>
</dbReference>
<dbReference type="PROSITE" id="PS50975">
    <property type="entry name" value="ATP_GRASP"/>
    <property type="match status" value="1"/>
</dbReference>
<dbReference type="PROSITE" id="PS00843">
    <property type="entry name" value="DALA_DALA_LIGASE_1"/>
    <property type="match status" value="1"/>
</dbReference>
<dbReference type="PROSITE" id="PS00844">
    <property type="entry name" value="DALA_DALA_LIGASE_2"/>
    <property type="match status" value="1"/>
</dbReference>